<dbReference type="EMBL" id="GQ918270">
    <property type="protein sequence ID" value="ADB08411.1"/>
    <property type="molecule type" value="mRNA"/>
</dbReference>
<dbReference type="SMR" id="D2X5W3"/>
<dbReference type="GO" id="GO:0005576">
    <property type="term" value="C:extracellular region"/>
    <property type="evidence" value="ECO:0007669"/>
    <property type="project" value="UniProtKB-SubCell"/>
</dbReference>
<dbReference type="GO" id="GO:0090729">
    <property type="term" value="F:toxin activity"/>
    <property type="evidence" value="ECO:0007669"/>
    <property type="project" value="UniProtKB-KW"/>
</dbReference>
<dbReference type="GO" id="GO:0006952">
    <property type="term" value="P:defense response"/>
    <property type="evidence" value="ECO:0007669"/>
    <property type="project" value="InterPro"/>
</dbReference>
<dbReference type="InterPro" id="IPR001855">
    <property type="entry name" value="Defensin_beta-like"/>
</dbReference>
<dbReference type="Pfam" id="PF00711">
    <property type="entry name" value="Defensin_beta"/>
    <property type="match status" value="1"/>
</dbReference>
<dbReference type="SUPFAM" id="SSF57392">
    <property type="entry name" value="Defensin-like"/>
    <property type="match status" value="1"/>
</dbReference>
<keyword id="KW-0677">Repeat</keyword>
<keyword id="KW-0964">Secreted</keyword>
<keyword id="KW-0732">Signal</keyword>
<keyword id="KW-0800">Toxin</keyword>
<reference key="1">
    <citation type="journal article" date="2010" name="Mol. Biol. Evol.">
        <title>Novel venom proteins produced by differential domain-expression strategies in beaded lizards and gila monsters (genus Heloderma).</title>
        <authorList>
            <person name="Fry B.G."/>
            <person name="Roelants K."/>
            <person name="Winter K."/>
            <person name="Hodgson W.C."/>
            <person name="Griesman L."/>
            <person name="Kwok H.F."/>
            <person name="Scanlon D."/>
            <person name="Karas J."/>
            <person name="Shaw C."/>
            <person name="Wong L."/>
            <person name="Norman J.A."/>
        </authorList>
    </citation>
    <scope>NUCLEOTIDE SEQUENCE [MRNA]</scope>
    <source>
        <tissue>Venom gland</tissue>
    </source>
</reference>
<feature type="signal peptide" evidence="1">
    <location>
        <begin position="1"/>
        <end position="26"/>
    </location>
</feature>
<feature type="chain" id="PRO_0000414107" description="Helofensin-2">
    <location>
        <begin position="27"/>
        <end position="183"/>
    </location>
</feature>
<feature type="repeat" description="C(6)C(4)C(9)C(6)CC 1; approximate">
    <location>
        <begin position="27"/>
        <end position="64"/>
    </location>
</feature>
<feature type="repeat" description="C(6)C(4)C(9)C(6)CC 2; approximate">
    <location>
        <begin position="65"/>
        <end position="101"/>
    </location>
</feature>
<feature type="repeat" description="C(6)C(4)C(9)C(6)CC 3; approximate">
    <location>
        <begin position="102"/>
        <end position="139"/>
    </location>
</feature>
<feature type="repeat" description="C(6)C(4)C(9)C(6)CC 4; approximate">
    <location>
        <begin position="140"/>
        <end position="177"/>
    </location>
</feature>
<name>LETH2_HELSC</name>
<proteinExistence type="evidence at transcript level"/>
<sequence length="183" mass="19675">MQMDWLFIAVISGIGLLSSGVPGTQGAYTTEQCRALNGSCNFYACFPKNVIIGKCDWWGWSCCARTPLERCTAKKGTCTKTGCTKTDTDHGPCDGGAQCCQRDPVKYCKFHGNVCGRGKCPMDHIPIGEQCMPGYPCCKRDGPAYCKSKGGKCLRRCSQIVPTDIIGVCADGVPCCKSRQSTG</sequence>
<protein>
    <recommendedName>
        <fullName>Helofensin-2</fullName>
    </recommendedName>
    <alternativeName>
        <fullName>Lethal toxin 2</fullName>
    </alternativeName>
</protein>
<comment type="function">
    <text evidence="1">Lethal toxin which possesses an inhibitory effect on direct electrical stimulation of the isolated hemi-diaphragm of mice. Neither hemorrhagic nor hemolytic activities are detected. Phospholipase A2 activity, proteolytic activity and arginine esterolytic activity are absent (By similarity).</text>
</comment>
<comment type="subcellular location">
    <subcellularLocation>
        <location evidence="1">Secreted</location>
    </subcellularLocation>
</comment>
<comment type="tissue specificity">
    <text>Expressed by the mandibular venom gland.</text>
</comment>
<comment type="similarity">
    <text evidence="2">Belongs to the beta-defensin family. Helofensin subfamily.</text>
</comment>
<accession>D2X5W3</accession>
<evidence type="ECO:0000250" key="1"/>
<evidence type="ECO:0000305" key="2"/>
<organism>
    <name type="scientific">Heloderma suspectum cinctum</name>
    <name type="common">Banded Gila monster</name>
    <dbReference type="NCBI Taxonomy" id="537493"/>
    <lineage>
        <taxon>Eukaryota</taxon>
        <taxon>Metazoa</taxon>
        <taxon>Chordata</taxon>
        <taxon>Craniata</taxon>
        <taxon>Vertebrata</taxon>
        <taxon>Euteleostomi</taxon>
        <taxon>Lepidosauria</taxon>
        <taxon>Squamata</taxon>
        <taxon>Bifurcata</taxon>
        <taxon>Unidentata</taxon>
        <taxon>Episquamata</taxon>
        <taxon>Toxicofera</taxon>
        <taxon>Anguimorpha</taxon>
        <taxon>Neoanguimorpha</taxon>
        <taxon>Helodermatidae</taxon>
        <taxon>Heloderma</taxon>
    </lineage>
</organism>